<accession>A4WL27</accession>
<comment type="function">
    <text evidence="1">Catalyzes the interconversion of 2-phosphoglycerate and 3-phosphoglycerate.</text>
</comment>
<comment type="catalytic activity">
    <reaction evidence="1">
        <text>(2R)-2-phosphoglycerate = (2R)-3-phosphoglycerate</text>
        <dbReference type="Rhea" id="RHEA:15901"/>
        <dbReference type="ChEBI" id="CHEBI:58272"/>
        <dbReference type="ChEBI" id="CHEBI:58289"/>
        <dbReference type="EC" id="5.4.2.12"/>
    </reaction>
</comment>
<comment type="pathway">
    <text evidence="1">Carbohydrate degradation; glycolysis; pyruvate from D-glyceraldehyde 3-phosphate: step 3/5.</text>
</comment>
<comment type="similarity">
    <text evidence="1">Belongs to the BPG-independent phosphoglycerate mutase family. A-PGAM subfamily.</text>
</comment>
<organism>
    <name type="scientific">Pyrobaculum arsenaticum (strain DSM 13514 / JCM 11321 / PZ6)</name>
    <dbReference type="NCBI Taxonomy" id="340102"/>
    <lineage>
        <taxon>Archaea</taxon>
        <taxon>Thermoproteota</taxon>
        <taxon>Thermoprotei</taxon>
        <taxon>Thermoproteales</taxon>
        <taxon>Thermoproteaceae</taxon>
        <taxon>Pyrobaculum</taxon>
    </lineage>
</organism>
<gene>
    <name evidence="1" type="primary">apgM</name>
    <name type="ordered locus">Pars_1540</name>
</gene>
<proteinExistence type="inferred from homology"/>
<feature type="chain" id="PRO_1000087368" description="2,3-bisphosphoglycerate-independent phosphoglycerate mutase">
    <location>
        <begin position="1"/>
        <end position="411"/>
    </location>
</feature>
<dbReference type="EC" id="5.4.2.12" evidence="1"/>
<dbReference type="EMBL" id="CP000660">
    <property type="protein sequence ID" value="ABP51094.1"/>
    <property type="molecule type" value="Genomic_DNA"/>
</dbReference>
<dbReference type="SMR" id="A4WL27"/>
<dbReference type="STRING" id="340102.Pars_1540"/>
<dbReference type="KEGG" id="pas:Pars_1540"/>
<dbReference type="HOGENOM" id="CLU_034906_2_0_2"/>
<dbReference type="OrthoDB" id="52918at2157"/>
<dbReference type="PhylomeDB" id="A4WL27"/>
<dbReference type="UniPathway" id="UPA00109">
    <property type="reaction ID" value="UER00186"/>
</dbReference>
<dbReference type="Proteomes" id="UP000001567">
    <property type="component" value="Chromosome"/>
</dbReference>
<dbReference type="GO" id="GO:0046872">
    <property type="term" value="F:metal ion binding"/>
    <property type="evidence" value="ECO:0007669"/>
    <property type="project" value="InterPro"/>
</dbReference>
<dbReference type="GO" id="GO:0004619">
    <property type="term" value="F:phosphoglycerate mutase activity"/>
    <property type="evidence" value="ECO:0007669"/>
    <property type="project" value="UniProtKB-EC"/>
</dbReference>
<dbReference type="GO" id="GO:0006096">
    <property type="term" value="P:glycolytic process"/>
    <property type="evidence" value="ECO:0007669"/>
    <property type="project" value="UniProtKB-UniRule"/>
</dbReference>
<dbReference type="CDD" id="cd16011">
    <property type="entry name" value="iPGM_like"/>
    <property type="match status" value="1"/>
</dbReference>
<dbReference type="Gene3D" id="3.40.720.10">
    <property type="entry name" value="Alkaline Phosphatase, subunit A"/>
    <property type="match status" value="1"/>
</dbReference>
<dbReference type="Gene3D" id="3.30.70.2130">
    <property type="entry name" value="Metalloenzyme domain"/>
    <property type="match status" value="1"/>
</dbReference>
<dbReference type="HAMAP" id="MF_01402_A">
    <property type="entry name" value="ApgM_A"/>
    <property type="match status" value="1"/>
</dbReference>
<dbReference type="InterPro" id="IPR017850">
    <property type="entry name" value="Alkaline_phosphatase_core_sf"/>
</dbReference>
<dbReference type="InterPro" id="IPR023665">
    <property type="entry name" value="ApgAM_prokaryotes"/>
</dbReference>
<dbReference type="InterPro" id="IPR006124">
    <property type="entry name" value="Metalloenzyme"/>
</dbReference>
<dbReference type="InterPro" id="IPR004456">
    <property type="entry name" value="Pglycerate_mutase_ApgM"/>
</dbReference>
<dbReference type="InterPro" id="IPR042253">
    <property type="entry name" value="Pglycerate_mutase_ApgM_sf"/>
</dbReference>
<dbReference type="NCBIfam" id="TIGR00306">
    <property type="entry name" value="apgM"/>
    <property type="match status" value="1"/>
</dbReference>
<dbReference type="NCBIfam" id="NF003104">
    <property type="entry name" value="PRK04024.1"/>
    <property type="match status" value="1"/>
</dbReference>
<dbReference type="PANTHER" id="PTHR31209">
    <property type="entry name" value="COFACTOR-INDEPENDENT PHOSPHOGLYCERATE MUTASE"/>
    <property type="match status" value="1"/>
</dbReference>
<dbReference type="PANTHER" id="PTHR31209:SF0">
    <property type="entry name" value="METALLOENZYME DOMAIN-CONTAINING PROTEIN"/>
    <property type="match status" value="1"/>
</dbReference>
<dbReference type="Pfam" id="PF01676">
    <property type="entry name" value="Metalloenzyme"/>
    <property type="match status" value="1"/>
</dbReference>
<dbReference type="Pfam" id="PF10143">
    <property type="entry name" value="PhosphMutase"/>
    <property type="match status" value="1"/>
</dbReference>
<dbReference type="PIRSF" id="PIRSF006392">
    <property type="entry name" value="IPGAM_arch"/>
    <property type="match status" value="1"/>
</dbReference>
<dbReference type="SUPFAM" id="SSF53649">
    <property type="entry name" value="Alkaline phosphatase-like"/>
    <property type="match status" value="1"/>
</dbReference>
<reference key="1">
    <citation type="submission" date="2007-04" db="EMBL/GenBank/DDBJ databases">
        <title>Complete sequence of Pyrobaculum arsenaticum DSM 13514.</title>
        <authorList>
            <consortium name="US DOE Joint Genome Institute"/>
            <person name="Copeland A."/>
            <person name="Lucas S."/>
            <person name="Lapidus A."/>
            <person name="Barry K."/>
            <person name="Glavina del Rio T."/>
            <person name="Dalin E."/>
            <person name="Tice H."/>
            <person name="Pitluck S."/>
            <person name="Chain P."/>
            <person name="Malfatti S."/>
            <person name="Shin M."/>
            <person name="Vergez L."/>
            <person name="Schmutz J."/>
            <person name="Larimer F."/>
            <person name="Land M."/>
            <person name="Hauser L."/>
            <person name="Kyrpides N."/>
            <person name="Mikhailova N."/>
            <person name="Cozen A.E."/>
            <person name="Fitz-Gibbon S.T."/>
            <person name="House C.H."/>
            <person name="Saltikov C."/>
            <person name="Lowe T.M."/>
            <person name="Richardson P."/>
        </authorList>
    </citation>
    <scope>NUCLEOTIDE SEQUENCE [LARGE SCALE GENOMIC DNA]</scope>
    <source>
        <strain>ATCC 700994 / DSM 13514 / JCM 11321 / PZ6</strain>
    </source>
</reference>
<name>APGM_PYRAR</name>
<protein>
    <recommendedName>
        <fullName evidence="1">2,3-bisphosphoglycerate-independent phosphoglycerate mutase</fullName>
        <shortName evidence="1">BPG-independent PGAM</shortName>
        <shortName evidence="1">Phosphoglyceromutase</shortName>
        <shortName evidence="1">aPGAM</shortName>
        <ecNumber evidence="1">5.4.2.12</ecNumber>
    </recommendedName>
</protein>
<evidence type="ECO:0000255" key="1">
    <source>
        <dbReference type="HAMAP-Rule" id="MF_01402"/>
    </source>
</evidence>
<sequence>MPSVLWILFDGGGDRPAGGKTPFHAAFKPTIDYLTANGSCGILDPIAPGVRPGSDTAHLALFGYDPFKYYTGRGAFEALGADVALKPGDVAFRTNLATVDENGVVIDRRAGRYIAPEEAKAVEDLMKKIGEEVGRKYGVEVVYKSTVEHRGVLVLRGAVSHRVSDTDPHKVGAKMARAEPLENSKEAALTAEVVNELSRRFTEAAAGLEINKARRLQGRLPINAILLRGGGYMPQIEPIRERYNIRAAAIAGVALIRGVARAVGMDVYTAKGLGGTKDDVFDEAVKLAVELMSRYDVVFLHVKGTDSTSHDGDFNGKVSVIERLDKALAPYLDALLKNYVVVTSDHATPVGVREHTGEPVPVMLYGPDVVVDDVAKFSELTCWRGALGRIRGIDIIPILGSYLGLSEKFGE</sequence>
<keyword id="KW-0324">Glycolysis</keyword>
<keyword id="KW-0413">Isomerase</keyword>